<reference key="1">
    <citation type="journal article" date="2016" name="Genome Announc.">
        <title>Complete genome sequence of Alkaliphilus metalliredigens strain QYMF, an alkaliphilic and metal-reducing bacterium isolated from borax-contaminated leachate ponds.</title>
        <authorList>
            <person name="Hwang C."/>
            <person name="Copeland A."/>
            <person name="Lucas S."/>
            <person name="Lapidus A."/>
            <person name="Barry K."/>
            <person name="Detter J.C."/>
            <person name="Glavina Del Rio T."/>
            <person name="Hammon N."/>
            <person name="Israni S."/>
            <person name="Dalin E."/>
            <person name="Tice H."/>
            <person name="Pitluck S."/>
            <person name="Chertkov O."/>
            <person name="Brettin T."/>
            <person name="Bruce D."/>
            <person name="Han C."/>
            <person name="Schmutz J."/>
            <person name="Larimer F."/>
            <person name="Land M.L."/>
            <person name="Hauser L."/>
            <person name="Kyrpides N."/>
            <person name="Mikhailova N."/>
            <person name="Ye Q."/>
            <person name="Zhou J."/>
            <person name="Richardson P."/>
            <person name="Fields M.W."/>
        </authorList>
    </citation>
    <scope>NUCLEOTIDE SEQUENCE [LARGE SCALE GENOMIC DNA]</scope>
    <source>
        <strain>QYMF</strain>
    </source>
</reference>
<protein>
    <recommendedName>
        <fullName evidence="1">Exodeoxyribonuclease 7 large subunit</fullName>
        <ecNumber evidence="1">3.1.11.6</ecNumber>
    </recommendedName>
    <alternativeName>
        <fullName evidence="1">Exodeoxyribonuclease VII large subunit</fullName>
        <shortName evidence="1">Exonuclease VII large subunit</shortName>
    </alternativeName>
</protein>
<evidence type="ECO:0000255" key="1">
    <source>
        <dbReference type="HAMAP-Rule" id="MF_00378"/>
    </source>
</evidence>
<keyword id="KW-0963">Cytoplasm</keyword>
<keyword id="KW-0269">Exonuclease</keyword>
<keyword id="KW-0378">Hydrolase</keyword>
<keyword id="KW-0540">Nuclease</keyword>
<keyword id="KW-1185">Reference proteome</keyword>
<proteinExistence type="inferred from homology"/>
<feature type="chain" id="PRO_1000060024" description="Exodeoxyribonuclease 7 large subunit">
    <location>
        <begin position="1"/>
        <end position="410"/>
    </location>
</feature>
<name>EX7L_ALKMQ</name>
<organism>
    <name type="scientific">Alkaliphilus metalliredigens (strain QYMF)</name>
    <dbReference type="NCBI Taxonomy" id="293826"/>
    <lineage>
        <taxon>Bacteria</taxon>
        <taxon>Bacillati</taxon>
        <taxon>Bacillota</taxon>
        <taxon>Clostridia</taxon>
        <taxon>Peptostreptococcales</taxon>
        <taxon>Natronincolaceae</taxon>
        <taxon>Alkaliphilus</taxon>
    </lineage>
</organism>
<gene>
    <name evidence="1" type="primary">xseA</name>
    <name type="ordered locus">Amet_2503</name>
</gene>
<accession>A6TR38</accession>
<dbReference type="EC" id="3.1.11.6" evidence="1"/>
<dbReference type="EMBL" id="CP000724">
    <property type="protein sequence ID" value="ABR48656.1"/>
    <property type="molecule type" value="Genomic_DNA"/>
</dbReference>
<dbReference type="RefSeq" id="WP_012063631.1">
    <property type="nucleotide sequence ID" value="NC_009633.1"/>
</dbReference>
<dbReference type="SMR" id="A6TR38"/>
<dbReference type="STRING" id="293826.Amet_2503"/>
<dbReference type="KEGG" id="amt:Amet_2503"/>
<dbReference type="eggNOG" id="COG1570">
    <property type="taxonomic scope" value="Bacteria"/>
</dbReference>
<dbReference type="HOGENOM" id="CLU_023625_3_1_9"/>
<dbReference type="OrthoDB" id="9802795at2"/>
<dbReference type="Proteomes" id="UP000001572">
    <property type="component" value="Chromosome"/>
</dbReference>
<dbReference type="GO" id="GO:0005737">
    <property type="term" value="C:cytoplasm"/>
    <property type="evidence" value="ECO:0007669"/>
    <property type="project" value="UniProtKB-SubCell"/>
</dbReference>
<dbReference type="GO" id="GO:0009318">
    <property type="term" value="C:exodeoxyribonuclease VII complex"/>
    <property type="evidence" value="ECO:0007669"/>
    <property type="project" value="InterPro"/>
</dbReference>
<dbReference type="GO" id="GO:0008855">
    <property type="term" value="F:exodeoxyribonuclease VII activity"/>
    <property type="evidence" value="ECO:0007669"/>
    <property type="project" value="UniProtKB-UniRule"/>
</dbReference>
<dbReference type="GO" id="GO:0003676">
    <property type="term" value="F:nucleic acid binding"/>
    <property type="evidence" value="ECO:0007669"/>
    <property type="project" value="InterPro"/>
</dbReference>
<dbReference type="GO" id="GO:0006308">
    <property type="term" value="P:DNA catabolic process"/>
    <property type="evidence" value="ECO:0007669"/>
    <property type="project" value="UniProtKB-UniRule"/>
</dbReference>
<dbReference type="CDD" id="cd04489">
    <property type="entry name" value="ExoVII_LU_OBF"/>
    <property type="match status" value="1"/>
</dbReference>
<dbReference type="HAMAP" id="MF_00378">
    <property type="entry name" value="Exonuc_7_L"/>
    <property type="match status" value="1"/>
</dbReference>
<dbReference type="InterPro" id="IPR003753">
    <property type="entry name" value="Exonuc_VII_L"/>
</dbReference>
<dbReference type="InterPro" id="IPR020579">
    <property type="entry name" value="Exonuc_VII_lsu_C"/>
</dbReference>
<dbReference type="InterPro" id="IPR025824">
    <property type="entry name" value="OB-fold_nuc-bd_dom"/>
</dbReference>
<dbReference type="NCBIfam" id="TIGR00237">
    <property type="entry name" value="xseA"/>
    <property type="match status" value="1"/>
</dbReference>
<dbReference type="PANTHER" id="PTHR30008">
    <property type="entry name" value="EXODEOXYRIBONUCLEASE 7 LARGE SUBUNIT"/>
    <property type="match status" value="1"/>
</dbReference>
<dbReference type="PANTHER" id="PTHR30008:SF0">
    <property type="entry name" value="EXODEOXYRIBONUCLEASE 7 LARGE SUBUNIT"/>
    <property type="match status" value="1"/>
</dbReference>
<dbReference type="Pfam" id="PF02601">
    <property type="entry name" value="Exonuc_VII_L"/>
    <property type="match status" value="2"/>
</dbReference>
<dbReference type="Pfam" id="PF13742">
    <property type="entry name" value="tRNA_anti_2"/>
    <property type="match status" value="1"/>
</dbReference>
<sequence length="410" mass="46234">MQIKALSVSEINHYIKRIMINDPILSNVYIKGEISNYKLHSSGHIYFTLKDEKSRVSSVMFKTNTEQLKFLPEEGMQVLCRGYISLYERGGLYQFYVDHMEAAGVGALYLAYQQLKEKLEKQGYFDGKFKKEIPLIPRKIAVVTSPTGAAVRDIISVIKRRFPHVEIYLFPVLVQGDRAAPSIARAVELLNLFGGIDVAIIGRGGGSIEELWPFNEETVAEAIFSSQVPIISAVGHETDFTIADFVADLRAPTPSVAAERVVPDVKEVVERLNTLKDRLNKTLVKSIDAKRNQLGIIKSNYYFKNPLNMIYDRQQHLDILMKDLTRNINVKNSLYSNNVHRLGERLNSVSPLSVFSRGYALAENKKGERIKTISNVKLKESITVQLIDGQLSCEVTNILKEDKLVGKNQI</sequence>
<comment type="function">
    <text evidence="1">Bidirectionally degrades single-stranded DNA into large acid-insoluble oligonucleotides, which are then degraded further into small acid-soluble oligonucleotides.</text>
</comment>
<comment type="catalytic activity">
    <reaction evidence="1">
        <text>Exonucleolytic cleavage in either 5'- to 3'- or 3'- to 5'-direction to yield nucleoside 5'-phosphates.</text>
        <dbReference type="EC" id="3.1.11.6"/>
    </reaction>
</comment>
<comment type="subunit">
    <text evidence="1">Heterooligomer composed of large and small subunits.</text>
</comment>
<comment type="subcellular location">
    <subcellularLocation>
        <location evidence="1">Cytoplasm</location>
    </subcellularLocation>
</comment>
<comment type="similarity">
    <text evidence="1">Belongs to the XseA family.</text>
</comment>